<comment type="function">
    <text evidence="1">Involved in the binding of tRNA to the ribosomes.</text>
</comment>
<comment type="subunit">
    <text evidence="1">Part of the 30S ribosomal subunit.</text>
</comment>
<comment type="similarity">
    <text evidence="1">Belongs to the universal ribosomal protein uS10 family.</text>
</comment>
<evidence type="ECO:0000255" key="1">
    <source>
        <dbReference type="HAMAP-Rule" id="MF_00508"/>
    </source>
</evidence>
<evidence type="ECO:0000305" key="2"/>
<feature type="chain" id="PRO_1000072465" description="Small ribosomal subunit protein uS10">
    <location>
        <begin position="1"/>
        <end position="102"/>
    </location>
</feature>
<dbReference type="EMBL" id="CP000774">
    <property type="protein sequence ID" value="ABS64343.1"/>
    <property type="molecule type" value="Genomic_DNA"/>
</dbReference>
<dbReference type="RefSeq" id="WP_012111657.1">
    <property type="nucleotide sequence ID" value="NC_009719.1"/>
</dbReference>
<dbReference type="SMR" id="A7HWR0"/>
<dbReference type="STRING" id="402881.Plav_2735"/>
<dbReference type="KEGG" id="pla:Plav_2735"/>
<dbReference type="eggNOG" id="COG0051">
    <property type="taxonomic scope" value="Bacteria"/>
</dbReference>
<dbReference type="HOGENOM" id="CLU_122625_1_3_5"/>
<dbReference type="OrthoDB" id="9804464at2"/>
<dbReference type="Proteomes" id="UP000006377">
    <property type="component" value="Chromosome"/>
</dbReference>
<dbReference type="GO" id="GO:1990904">
    <property type="term" value="C:ribonucleoprotein complex"/>
    <property type="evidence" value="ECO:0007669"/>
    <property type="project" value="UniProtKB-KW"/>
</dbReference>
<dbReference type="GO" id="GO:0005840">
    <property type="term" value="C:ribosome"/>
    <property type="evidence" value="ECO:0007669"/>
    <property type="project" value="UniProtKB-KW"/>
</dbReference>
<dbReference type="GO" id="GO:0003735">
    <property type="term" value="F:structural constituent of ribosome"/>
    <property type="evidence" value="ECO:0007669"/>
    <property type="project" value="InterPro"/>
</dbReference>
<dbReference type="GO" id="GO:0000049">
    <property type="term" value="F:tRNA binding"/>
    <property type="evidence" value="ECO:0007669"/>
    <property type="project" value="UniProtKB-UniRule"/>
</dbReference>
<dbReference type="GO" id="GO:0006412">
    <property type="term" value="P:translation"/>
    <property type="evidence" value="ECO:0007669"/>
    <property type="project" value="UniProtKB-UniRule"/>
</dbReference>
<dbReference type="FunFam" id="3.30.70.600:FF:000001">
    <property type="entry name" value="30S ribosomal protein S10"/>
    <property type="match status" value="1"/>
</dbReference>
<dbReference type="Gene3D" id="3.30.70.600">
    <property type="entry name" value="Ribosomal protein S10 domain"/>
    <property type="match status" value="1"/>
</dbReference>
<dbReference type="HAMAP" id="MF_00508">
    <property type="entry name" value="Ribosomal_uS10"/>
    <property type="match status" value="1"/>
</dbReference>
<dbReference type="InterPro" id="IPR001848">
    <property type="entry name" value="Ribosomal_uS10"/>
</dbReference>
<dbReference type="InterPro" id="IPR018268">
    <property type="entry name" value="Ribosomal_uS10_CS"/>
</dbReference>
<dbReference type="InterPro" id="IPR027486">
    <property type="entry name" value="Ribosomal_uS10_dom"/>
</dbReference>
<dbReference type="InterPro" id="IPR036838">
    <property type="entry name" value="Ribosomal_uS10_dom_sf"/>
</dbReference>
<dbReference type="NCBIfam" id="NF001861">
    <property type="entry name" value="PRK00596.1"/>
    <property type="match status" value="1"/>
</dbReference>
<dbReference type="NCBIfam" id="TIGR01049">
    <property type="entry name" value="rpsJ_bact"/>
    <property type="match status" value="1"/>
</dbReference>
<dbReference type="PANTHER" id="PTHR11700">
    <property type="entry name" value="30S RIBOSOMAL PROTEIN S10 FAMILY MEMBER"/>
    <property type="match status" value="1"/>
</dbReference>
<dbReference type="Pfam" id="PF00338">
    <property type="entry name" value="Ribosomal_S10"/>
    <property type="match status" value="1"/>
</dbReference>
<dbReference type="PRINTS" id="PR00971">
    <property type="entry name" value="RIBOSOMALS10"/>
</dbReference>
<dbReference type="SMART" id="SM01403">
    <property type="entry name" value="Ribosomal_S10"/>
    <property type="match status" value="1"/>
</dbReference>
<dbReference type="SUPFAM" id="SSF54999">
    <property type="entry name" value="Ribosomal protein S10"/>
    <property type="match status" value="1"/>
</dbReference>
<dbReference type="PROSITE" id="PS00361">
    <property type="entry name" value="RIBOSOMAL_S10"/>
    <property type="match status" value="1"/>
</dbReference>
<sequence length="102" mass="11674">MQRQKIRIRLKGFDHRVLDVSTREIVNTAKRTGAQVLGPIPLPTRLEKFTVLRGPHIDKKSREQFEIRTHKRVLDIVDPTPQTVDALMKLDLAAGVDVEIKL</sequence>
<organism>
    <name type="scientific">Parvibaculum lavamentivorans (strain DS-1 / DSM 13023 / NCIMB 13966)</name>
    <dbReference type="NCBI Taxonomy" id="402881"/>
    <lineage>
        <taxon>Bacteria</taxon>
        <taxon>Pseudomonadati</taxon>
        <taxon>Pseudomonadota</taxon>
        <taxon>Alphaproteobacteria</taxon>
        <taxon>Hyphomicrobiales</taxon>
        <taxon>Parvibaculaceae</taxon>
        <taxon>Parvibaculum</taxon>
    </lineage>
</organism>
<keyword id="KW-1185">Reference proteome</keyword>
<keyword id="KW-0687">Ribonucleoprotein</keyword>
<keyword id="KW-0689">Ribosomal protein</keyword>
<proteinExistence type="inferred from homology"/>
<name>RS10_PARL1</name>
<gene>
    <name evidence="1" type="primary">rpsJ</name>
    <name type="ordered locus">Plav_2735</name>
</gene>
<accession>A7HWR0</accession>
<protein>
    <recommendedName>
        <fullName evidence="1">Small ribosomal subunit protein uS10</fullName>
    </recommendedName>
    <alternativeName>
        <fullName evidence="2">30S ribosomal protein S10</fullName>
    </alternativeName>
</protein>
<reference key="1">
    <citation type="journal article" date="2011" name="Stand. Genomic Sci.">
        <title>Complete genome sequence of Parvibaculum lavamentivorans type strain (DS-1(T)).</title>
        <authorList>
            <person name="Schleheck D."/>
            <person name="Weiss M."/>
            <person name="Pitluck S."/>
            <person name="Bruce D."/>
            <person name="Land M.L."/>
            <person name="Han S."/>
            <person name="Saunders E."/>
            <person name="Tapia R."/>
            <person name="Detter C."/>
            <person name="Brettin T."/>
            <person name="Han J."/>
            <person name="Woyke T."/>
            <person name="Goodwin L."/>
            <person name="Pennacchio L."/>
            <person name="Nolan M."/>
            <person name="Cook A.M."/>
            <person name="Kjelleberg S."/>
            <person name="Thomas T."/>
        </authorList>
    </citation>
    <scope>NUCLEOTIDE SEQUENCE [LARGE SCALE GENOMIC DNA]</scope>
    <source>
        <strain>DS-1 / DSM 13023 / NCIMB 13966</strain>
    </source>
</reference>